<organism>
    <name type="scientific">Escherichia coli (strain SMS-3-5 / SECEC)</name>
    <dbReference type="NCBI Taxonomy" id="439855"/>
    <lineage>
        <taxon>Bacteria</taxon>
        <taxon>Pseudomonadati</taxon>
        <taxon>Pseudomonadota</taxon>
        <taxon>Gammaproteobacteria</taxon>
        <taxon>Enterobacterales</taxon>
        <taxon>Enterobacteriaceae</taxon>
        <taxon>Escherichia</taxon>
    </lineage>
</organism>
<feature type="chain" id="PRO_1000192738" description="Protease HtpX">
    <location>
        <begin position="1"/>
        <end position="293"/>
    </location>
</feature>
<feature type="transmembrane region" description="Helical" evidence="1">
    <location>
        <begin position="4"/>
        <end position="24"/>
    </location>
</feature>
<feature type="transmembrane region" description="Helical" evidence="1">
    <location>
        <begin position="34"/>
        <end position="54"/>
    </location>
</feature>
<feature type="transmembrane region" description="Helical" evidence="1">
    <location>
        <begin position="158"/>
        <end position="178"/>
    </location>
</feature>
<feature type="transmembrane region" description="Helical" evidence="1">
    <location>
        <begin position="193"/>
        <end position="213"/>
    </location>
</feature>
<feature type="active site" evidence="1">
    <location>
        <position position="140"/>
    </location>
</feature>
<feature type="binding site" evidence="1">
    <location>
        <position position="139"/>
    </location>
    <ligand>
        <name>Zn(2+)</name>
        <dbReference type="ChEBI" id="CHEBI:29105"/>
        <note>catalytic</note>
    </ligand>
</feature>
<feature type="binding site" evidence="1">
    <location>
        <position position="143"/>
    </location>
    <ligand>
        <name>Zn(2+)</name>
        <dbReference type="ChEBI" id="CHEBI:29105"/>
        <note>catalytic</note>
    </ligand>
</feature>
<feature type="binding site" evidence="1">
    <location>
        <position position="222"/>
    </location>
    <ligand>
        <name>Zn(2+)</name>
        <dbReference type="ChEBI" id="CHEBI:29105"/>
        <note>catalytic</note>
    </ligand>
</feature>
<accession>B1LD43</accession>
<evidence type="ECO:0000255" key="1">
    <source>
        <dbReference type="HAMAP-Rule" id="MF_00188"/>
    </source>
</evidence>
<sequence length="293" mass="31957">MMRIALFLLTNLAVMVVFGLVLSLTGIQSSSVQGLMIMALLFGFGGSFVSLLMSKWMALRSVGGEVIEQPRNERERWLVNTVATQARQAGIAMPQVAIYHAPDINAFATGARRDASLVAVSTGLLQNMSPDEAEAVIAHEISHIANGDMVTMTLIQGVVNTFVIFISRILAQLAAGFMGGNRDEGEESNGNPLIYFAVATVLELVFGILASIITMWFSRHREFHADAGSAKLVGREKMIAALQRLKTSYEPQEATSMMAFCINGKSKSLSELFMTHPPLDKRIEALRTGEYLK</sequence>
<proteinExistence type="inferred from homology"/>
<comment type="cofactor">
    <cofactor evidence="1">
        <name>Zn(2+)</name>
        <dbReference type="ChEBI" id="CHEBI:29105"/>
    </cofactor>
    <text evidence="1">Binds 1 zinc ion per subunit.</text>
</comment>
<comment type="subcellular location">
    <subcellularLocation>
        <location evidence="1">Cell inner membrane</location>
        <topology evidence="1">Multi-pass membrane protein</topology>
    </subcellularLocation>
</comment>
<comment type="similarity">
    <text evidence="1">Belongs to the peptidase M48B family.</text>
</comment>
<name>HTPX_ECOSM</name>
<keyword id="KW-0997">Cell inner membrane</keyword>
<keyword id="KW-1003">Cell membrane</keyword>
<keyword id="KW-0378">Hydrolase</keyword>
<keyword id="KW-0472">Membrane</keyword>
<keyword id="KW-0479">Metal-binding</keyword>
<keyword id="KW-0482">Metalloprotease</keyword>
<keyword id="KW-0645">Protease</keyword>
<keyword id="KW-0812">Transmembrane</keyword>
<keyword id="KW-1133">Transmembrane helix</keyword>
<keyword id="KW-0862">Zinc</keyword>
<protein>
    <recommendedName>
        <fullName evidence="1">Protease HtpX</fullName>
        <ecNumber evidence="1">3.4.24.-</ecNumber>
    </recommendedName>
    <alternativeName>
        <fullName evidence="1">Heat shock protein HtpX</fullName>
    </alternativeName>
</protein>
<gene>
    <name evidence="1" type="primary">htpX</name>
    <name type="ordered locus">EcSMS35_1358</name>
</gene>
<reference key="1">
    <citation type="journal article" date="2008" name="J. Bacteriol.">
        <title>Insights into the environmental resistance gene pool from the genome sequence of the multidrug-resistant environmental isolate Escherichia coli SMS-3-5.</title>
        <authorList>
            <person name="Fricke W.F."/>
            <person name="Wright M.S."/>
            <person name="Lindell A.H."/>
            <person name="Harkins D.M."/>
            <person name="Baker-Austin C."/>
            <person name="Ravel J."/>
            <person name="Stepanauskas R."/>
        </authorList>
    </citation>
    <scope>NUCLEOTIDE SEQUENCE [LARGE SCALE GENOMIC DNA]</scope>
    <source>
        <strain>SMS-3-5 / SECEC</strain>
    </source>
</reference>
<dbReference type="EC" id="3.4.24.-" evidence="1"/>
<dbReference type="EMBL" id="CP000970">
    <property type="protein sequence ID" value="ACB18271.1"/>
    <property type="molecule type" value="Genomic_DNA"/>
</dbReference>
<dbReference type="RefSeq" id="WP_000984517.1">
    <property type="nucleotide sequence ID" value="NC_010498.1"/>
</dbReference>
<dbReference type="SMR" id="B1LD43"/>
<dbReference type="MEROPS" id="M48.002"/>
<dbReference type="GeneID" id="93776079"/>
<dbReference type="KEGG" id="ecm:EcSMS35_1358"/>
<dbReference type="HOGENOM" id="CLU_042266_1_0_6"/>
<dbReference type="Proteomes" id="UP000007011">
    <property type="component" value="Chromosome"/>
</dbReference>
<dbReference type="GO" id="GO:0005886">
    <property type="term" value="C:plasma membrane"/>
    <property type="evidence" value="ECO:0007669"/>
    <property type="project" value="UniProtKB-SubCell"/>
</dbReference>
<dbReference type="GO" id="GO:0004222">
    <property type="term" value="F:metalloendopeptidase activity"/>
    <property type="evidence" value="ECO:0007669"/>
    <property type="project" value="UniProtKB-UniRule"/>
</dbReference>
<dbReference type="GO" id="GO:0008270">
    <property type="term" value="F:zinc ion binding"/>
    <property type="evidence" value="ECO:0007669"/>
    <property type="project" value="UniProtKB-UniRule"/>
</dbReference>
<dbReference type="GO" id="GO:0006508">
    <property type="term" value="P:proteolysis"/>
    <property type="evidence" value="ECO:0007669"/>
    <property type="project" value="UniProtKB-KW"/>
</dbReference>
<dbReference type="CDD" id="cd07335">
    <property type="entry name" value="M48B_HtpX_like"/>
    <property type="match status" value="1"/>
</dbReference>
<dbReference type="FunFam" id="3.30.2010.10:FF:000001">
    <property type="entry name" value="Protease HtpX"/>
    <property type="match status" value="1"/>
</dbReference>
<dbReference type="Gene3D" id="3.30.2010.10">
    <property type="entry name" value="Metalloproteases ('zincins'), catalytic domain"/>
    <property type="match status" value="1"/>
</dbReference>
<dbReference type="HAMAP" id="MF_00188">
    <property type="entry name" value="Pept_M48_protease_HtpX"/>
    <property type="match status" value="1"/>
</dbReference>
<dbReference type="InterPro" id="IPR050083">
    <property type="entry name" value="HtpX_protease"/>
</dbReference>
<dbReference type="InterPro" id="IPR022919">
    <property type="entry name" value="Pept_M48_protease_HtpX"/>
</dbReference>
<dbReference type="InterPro" id="IPR001915">
    <property type="entry name" value="Peptidase_M48"/>
</dbReference>
<dbReference type="NCBIfam" id="NF003965">
    <property type="entry name" value="PRK05457.1"/>
    <property type="match status" value="1"/>
</dbReference>
<dbReference type="PANTHER" id="PTHR43221">
    <property type="entry name" value="PROTEASE HTPX"/>
    <property type="match status" value="1"/>
</dbReference>
<dbReference type="PANTHER" id="PTHR43221:SF1">
    <property type="entry name" value="PROTEASE HTPX"/>
    <property type="match status" value="1"/>
</dbReference>
<dbReference type="Pfam" id="PF01435">
    <property type="entry name" value="Peptidase_M48"/>
    <property type="match status" value="1"/>
</dbReference>